<sequence length="254" mass="29334">MFHKAEGIVIRTVDYGESNKIVTVFTREYGKIALMARGAKRPKSRLTAVTQLFTYGMMMFQKNAGLGTLTQGEIIQSFREVRNDLFRASYVSYVTDLTNKLTEDEKRNPYLFELLYQTIHYMNEGMDPDVLTRIFEVKMFTVAGIKPELDQCVSCRSTDVPVGFSIKEAGFLCKRCIEKDPHAYKITAQVAKLLRLFYHFDLQRLGTISLKPETKATLKTIIHQYYDEYSGLHLKSRRFLDQLESMGFHDQSTD</sequence>
<comment type="function">
    <text evidence="1">Involved in DNA repair and RecF pathway recombination.</text>
</comment>
<comment type="similarity">
    <text evidence="2">Belongs to the RecO family.</text>
</comment>
<gene>
    <name type="primary">recO</name>
    <name type="ordered locus">BH1369</name>
</gene>
<organism>
    <name type="scientific">Halalkalibacterium halodurans (strain ATCC BAA-125 / DSM 18197 / FERM 7344 / JCM 9153 / C-125)</name>
    <name type="common">Bacillus halodurans</name>
    <dbReference type="NCBI Taxonomy" id="272558"/>
    <lineage>
        <taxon>Bacteria</taxon>
        <taxon>Bacillati</taxon>
        <taxon>Bacillota</taxon>
        <taxon>Bacilli</taxon>
        <taxon>Bacillales</taxon>
        <taxon>Bacillaceae</taxon>
        <taxon>Halalkalibacterium (ex Joshi et al. 2022)</taxon>
    </lineage>
</organism>
<protein>
    <recommendedName>
        <fullName>DNA repair protein RecO</fullName>
    </recommendedName>
    <alternativeName>
        <fullName>Recombination protein O</fullName>
    </alternativeName>
</protein>
<keyword id="KW-0227">DNA damage</keyword>
<keyword id="KW-0233">DNA recombination</keyword>
<keyword id="KW-0234">DNA repair</keyword>
<keyword id="KW-1185">Reference proteome</keyword>
<feature type="chain" id="PRO_0000204929" description="DNA repair protein RecO">
    <location>
        <begin position="1"/>
        <end position="254"/>
    </location>
</feature>
<reference key="1">
    <citation type="journal article" date="2000" name="Nucleic Acids Res.">
        <title>Complete genome sequence of the alkaliphilic bacterium Bacillus halodurans and genomic sequence comparison with Bacillus subtilis.</title>
        <authorList>
            <person name="Takami H."/>
            <person name="Nakasone K."/>
            <person name="Takaki Y."/>
            <person name="Maeno G."/>
            <person name="Sasaki R."/>
            <person name="Masui N."/>
            <person name="Fuji F."/>
            <person name="Hirama C."/>
            <person name="Nakamura Y."/>
            <person name="Ogasawara N."/>
            <person name="Kuhara S."/>
            <person name="Horikoshi K."/>
        </authorList>
    </citation>
    <scope>NUCLEOTIDE SEQUENCE [LARGE SCALE GENOMIC DNA]</scope>
    <source>
        <strain>ATCC BAA-125 / DSM 18197 / FERM 7344 / JCM 9153 / C-125</strain>
    </source>
</reference>
<dbReference type="EMBL" id="BA000004">
    <property type="protein sequence ID" value="BAB05088.1"/>
    <property type="molecule type" value="Genomic_DNA"/>
</dbReference>
<dbReference type="PIR" id="A83821">
    <property type="entry name" value="A83821"/>
</dbReference>
<dbReference type="RefSeq" id="WP_010897534.1">
    <property type="nucleotide sequence ID" value="NC_002570.2"/>
</dbReference>
<dbReference type="SMR" id="Q9KD50"/>
<dbReference type="STRING" id="272558.gene:10727263"/>
<dbReference type="KEGG" id="bha:BH1369"/>
<dbReference type="eggNOG" id="COG1381">
    <property type="taxonomic scope" value="Bacteria"/>
</dbReference>
<dbReference type="HOGENOM" id="CLU_066632_4_0_9"/>
<dbReference type="OrthoDB" id="9797083at2"/>
<dbReference type="Proteomes" id="UP000001258">
    <property type="component" value="Chromosome"/>
</dbReference>
<dbReference type="GO" id="GO:0043590">
    <property type="term" value="C:bacterial nucleoid"/>
    <property type="evidence" value="ECO:0007669"/>
    <property type="project" value="TreeGrafter"/>
</dbReference>
<dbReference type="GO" id="GO:0006310">
    <property type="term" value="P:DNA recombination"/>
    <property type="evidence" value="ECO:0007669"/>
    <property type="project" value="UniProtKB-UniRule"/>
</dbReference>
<dbReference type="GO" id="GO:0006302">
    <property type="term" value="P:double-strand break repair"/>
    <property type="evidence" value="ECO:0007669"/>
    <property type="project" value="TreeGrafter"/>
</dbReference>
<dbReference type="Gene3D" id="2.40.50.140">
    <property type="entry name" value="Nucleic acid-binding proteins"/>
    <property type="match status" value="1"/>
</dbReference>
<dbReference type="Gene3D" id="1.20.1440.120">
    <property type="entry name" value="Recombination protein O, C-terminal domain"/>
    <property type="match status" value="1"/>
</dbReference>
<dbReference type="HAMAP" id="MF_00201">
    <property type="entry name" value="RecO"/>
    <property type="match status" value="1"/>
</dbReference>
<dbReference type="InterPro" id="IPR037278">
    <property type="entry name" value="ARFGAP/RecO"/>
</dbReference>
<dbReference type="InterPro" id="IPR022572">
    <property type="entry name" value="DNA_rep/recomb_RecO_N"/>
</dbReference>
<dbReference type="InterPro" id="IPR012340">
    <property type="entry name" value="NA-bd_OB-fold"/>
</dbReference>
<dbReference type="InterPro" id="IPR003717">
    <property type="entry name" value="RecO"/>
</dbReference>
<dbReference type="InterPro" id="IPR042242">
    <property type="entry name" value="RecO_C"/>
</dbReference>
<dbReference type="NCBIfam" id="TIGR00613">
    <property type="entry name" value="reco"/>
    <property type="match status" value="1"/>
</dbReference>
<dbReference type="PANTHER" id="PTHR33991">
    <property type="entry name" value="DNA REPAIR PROTEIN RECO"/>
    <property type="match status" value="1"/>
</dbReference>
<dbReference type="PANTHER" id="PTHR33991:SF1">
    <property type="entry name" value="DNA REPAIR PROTEIN RECO"/>
    <property type="match status" value="1"/>
</dbReference>
<dbReference type="Pfam" id="PF02565">
    <property type="entry name" value="RecO_C"/>
    <property type="match status" value="1"/>
</dbReference>
<dbReference type="Pfam" id="PF11967">
    <property type="entry name" value="RecO_N"/>
    <property type="match status" value="1"/>
</dbReference>
<dbReference type="SUPFAM" id="SSF57863">
    <property type="entry name" value="ArfGap/RecO-like zinc finger"/>
    <property type="match status" value="1"/>
</dbReference>
<dbReference type="SUPFAM" id="SSF50249">
    <property type="entry name" value="Nucleic acid-binding proteins"/>
    <property type="match status" value="1"/>
</dbReference>
<accession>Q9KD50</accession>
<evidence type="ECO:0000250" key="1"/>
<evidence type="ECO:0000305" key="2"/>
<name>RECO_HALH5</name>
<proteinExistence type="inferred from homology"/>